<dbReference type="EC" id="4.2.1.33" evidence="1"/>
<dbReference type="EMBL" id="CP001638">
    <property type="protein sequence ID" value="ACS25286.1"/>
    <property type="molecule type" value="Genomic_DNA"/>
</dbReference>
<dbReference type="SMR" id="C5D5L8"/>
<dbReference type="STRING" id="471223.GWCH70_2591"/>
<dbReference type="KEGG" id="gwc:GWCH70_2591"/>
<dbReference type="eggNOG" id="COG0065">
    <property type="taxonomic scope" value="Bacteria"/>
</dbReference>
<dbReference type="HOGENOM" id="CLU_006714_3_4_9"/>
<dbReference type="OrthoDB" id="9802769at2"/>
<dbReference type="UniPathway" id="UPA00048">
    <property type="reaction ID" value="UER00071"/>
</dbReference>
<dbReference type="GO" id="GO:0003861">
    <property type="term" value="F:3-isopropylmalate dehydratase activity"/>
    <property type="evidence" value="ECO:0007669"/>
    <property type="project" value="UniProtKB-UniRule"/>
</dbReference>
<dbReference type="GO" id="GO:0051539">
    <property type="term" value="F:4 iron, 4 sulfur cluster binding"/>
    <property type="evidence" value="ECO:0007669"/>
    <property type="project" value="UniProtKB-KW"/>
</dbReference>
<dbReference type="GO" id="GO:0046872">
    <property type="term" value="F:metal ion binding"/>
    <property type="evidence" value="ECO:0007669"/>
    <property type="project" value="UniProtKB-KW"/>
</dbReference>
<dbReference type="GO" id="GO:0009098">
    <property type="term" value="P:L-leucine biosynthetic process"/>
    <property type="evidence" value="ECO:0007669"/>
    <property type="project" value="UniProtKB-UniRule"/>
</dbReference>
<dbReference type="CDD" id="cd01583">
    <property type="entry name" value="IPMI"/>
    <property type="match status" value="1"/>
</dbReference>
<dbReference type="FunFam" id="3.30.499.10:FF:000007">
    <property type="entry name" value="3-isopropylmalate dehydratase large subunit"/>
    <property type="match status" value="1"/>
</dbReference>
<dbReference type="Gene3D" id="3.30.499.10">
    <property type="entry name" value="Aconitase, domain 3"/>
    <property type="match status" value="2"/>
</dbReference>
<dbReference type="HAMAP" id="MF_01026">
    <property type="entry name" value="LeuC_type1"/>
    <property type="match status" value="1"/>
</dbReference>
<dbReference type="InterPro" id="IPR004430">
    <property type="entry name" value="3-IsopropMal_deHydase_lsu"/>
</dbReference>
<dbReference type="InterPro" id="IPR015931">
    <property type="entry name" value="Acnase/IPM_dHydase_lsu_aba_1/3"/>
</dbReference>
<dbReference type="InterPro" id="IPR001030">
    <property type="entry name" value="Acoase/IPM_deHydtase_lsu_aba"/>
</dbReference>
<dbReference type="InterPro" id="IPR018136">
    <property type="entry name" value="Aconitase_4Fe-4S_BS"/>
</dbReference>
<dbReference type="InterPro" id="IPR036008">
    <property type="entry name" value="Aconitase_4Fe-4S_dom"/>
</dbReference>
<dbReference type="InterPro" id="IPR050067">
    <property type="entry name" value="IPM_dehydratase_rel_enz"/>
</dbReference>
<dbReference type="InterPro" id="IPR033941">
    <property type="entry name" value="IPMI_cat"/>
</dbReference>
<dbReference type="NCBIfam" id="TIGR00170">
    <property type="entry name" value="leuC"/>
    <property type="match status" value="1"/>
</dbReference>
<dbReference type="NCBIfam" id="NF004016">
    <property type="entry name" value="PRK05478.1"/>
    <property type="match status" value="1"/>
</dbReference>
<dbReference type="NCBIfam" id="NF009116">
    <property type="entry name" value="PRK12466.1"/>
    <property type="match status" value="1"/>
</dbReference>
<dbReference type="PANTHER" id="PTHR43822:SF9">
    <property type="entry name" value="3-ISOPROPYLMALATE DEHYDRATASE"/>
    <property type="match status" value="1"/>
</dbReference>
<dbReference type="PANTHER" id="PTHR43822">
    <property type="entry name" value="HOMOACONITASE, MITOCHONDRIAL-RELATED"/>
    <property type="match status" value="1"/>
</dbReference>
<dbReference type="Pfam" id="PF00330">
    <property type="entry name" value="Aconitase"/>
    <property type="match status" value="1"/>
</dbReference>
<dbReference type="PRINTS" id="PR00415">
    <property type="entry name" value="ACONITASE"/>
</dbReference>
<dbReference type="SUPFAM" id="SSF53732">
    <property type="entry name" value="Aconitase iron-sulfur domain"/>
    <property type="match status" value="1"/>
</dbReference>
<dbReference type="PROSITE" id="PS00450">
    <property type="entry name" value="ACONITASE_1"/>
    <property type="match status" value="1"/>
</dbReference>
<dbReference type="PROSITE" id="PS01244">
    <property type="entry name" value="ACONITASE_2"/>
    <property type="match status" value="1"/>
</dbReference>
<proteinExistence type="inferred from homology"/>
<sequence length="471" mass="51785">MKPKTIIEKIWENHVVYREDGKPDLLYIDLHLVHEVTSPQAFEGLRQKGRKVRRPDLTFATMDHNVPTVNRLVIEDEVARNQIAALERNCREFSIPLADLRSEEQGIVHVIGPELGLTQPGKTIVCGDSHTSTHGAFGALAFGIGTSEVEHVLATQTLWQHKPKTLQIRINGKLGEGVTAKDVILAIIGRYGVDVGTGYIIEFTGEVIRNMSMEERMTICNMSIEAGARAGLVSPDETTFAYLRGRKYAPKGEEFEKAVERWRALATDEGAEYDKTIEIDASTIAPMVTWGTNPSMSTSIEGTVPYPEDFSSETEQKAVRRALEYMGLEPGTPITEIPVQHVFIGSCTNSRISDLREAAKIVKGKKVAKGVRALVVPGSQQVKKQAEEEGLAQIFIDAGFEWRDSGCSACLGMNPDIIPEGEHCASTSNRNFEGRQGKGARTHLVSPAMAAAAAIYGHFVDVRKLQKEPVH</sequence>
<comment type="function">
    <text evidence="1">Catalyzes the isomerization between 2-isopropylmalate and 3-isopropylmalate, via the formation of 2-isopropylmaleate.</text>
</comment>
<comment type="catalytic activity">
    <reaction evidence="1">
        <text>(2R,3S)-3-isopropylmalate = (2S)-2-isopropylmalate</text>
        <dbReference type="Rhea" id="RHEA:32287"/>
        <dbReference type="ChEBI" id="CHEBI:1178"/>
        <dbReference type="ChEBI" id="CHEBI:35121"/>
        <dbReference type="EC" id="4.2.1.33"/>
    </reaction>
</comment>
<comment type="cofactor">
    <cofactor evidence="1">
        <name>[4Fe-4S] cluster</name>
        <dbReference type="ChEBI" id="CHEBI:49883"/>
    </cofactor>
    <text evidence="1">Binds 1 [4Fe-4S] cluster per subunit.</text>
</comment>
<comment type="pathway">
    <text evidence="1">Amino-acid biosynthesis; L-leucine biosynthesis; L-leucine from 3-methyl-2-oxobutanoate: step 2/4.</text>
</comment>
<comment type="subunit">
    <text evidence="1">Heterodimer of LeuC and LeuD.</text>
</comment>
<comment type="similarity">
    <text evidence="1">Belongs to the aconitase/IPM isomerase family. LeuC type 1 subfamily.</text>
</comment>
<evidence type="ECO:0000255" key="1">
    <source>
        <dbReference type="HAMAP-Rule" id="MF_01026"/>
    </source>
</evidence>
<protein>
    <recommendedName>
        <fullName evidence="1">3-isopropylmalate dehydratase large subunit</fullName>
        <ecNumber evidence="1">4.2.1.33</ecNumber>
    </recommendedName>
    <alternativeName>
        <fullName evidence="1">Alpha-IPM isomerase</fullName>
        <shortName evidence="1">IPMI</shortName>
    </alternativeName>
    <alternativeName>
        <fullName evidence="1">Isopropylmalate isomerase</fullName>
    </alternativeName>
</protein>
<keyword id="KW-0004">4Fe-4S</keyword>
<keyword id="KW-0028">Amino-acid biosynthesis</keyword>
<keyword id="KW-0100">Branched-chain amino acid biosynthesis</keyword>
<keyword id="KW-0408">Iron</keyword>
<keyword id="KW-0411">Iron-sulfur</keyword>
<keyword id="KW-0432">Leucine biosynthesis</keyword>
<keyword id="KW-0456">Lyase</keyword>
<keyword id="KW-0479">Metal-binding</keyword>
<reference key="1">
    <citation type="submission" date="2009-06" db="EMBL/GenBank/DDBJ databases">
        <title>Complete sequence of chromosome of Geopacillus sp. WCH70.</title>
        <authorList>
            <consortium name="US DOE Joint Genome Institute"/>
            <person name="Lucas S."/>
            <person name="Copeland A."/>
            <person name="Lapidus A."/>
            <person name="Glavina del Rio T."/>
            <person name="Dalin E."/>
            <person name="Tice H."/>
            <person name="Bruce D."/>
            <person name="Goodwin L."/>
            <person name="Pitluck S."/>
            <person name="Chertkov O."/>
            <person name="Brettin T."/>
            <person name="Detter J.C."/>
            <person name="Han C."/>
            <person name="Larimer F."/>
            <person name="Land M."/>
            <person name="Hauser L."/>
            <person name="Kyrpides N."/>
            <person name="Mikhailova N."/>
            <person name="Brumm P."/>
            <person name="Mead D.A."/>
            <person name="Richardson P."/>
        </authorList>
    </citation>
    <scope>NUCLEOTIDE SEQUENCE [LARGE SCALE GENOMIC DNA]</scope>
    <source>
        <strain>WCH70</strain>
    </source>
</reference>
<organism>
    <name type="scientific">Geobacillus sp. (strain WCH70)</name>
    <dbReference type="NCBI Taxonomy" id="471223"/>
    <lineage>
        <taxon>Bacteria</taxon>
        <taxon>Bacillati</taxon>
        <taxon>Bacillota</taxon>
        <taxon>Bacilli</taxon>
        <taxon>Bacillales</taxon>
        <taxon>Anoxybacillaceae</taxon>
        <taxon>Geobacillus</taxon>
    </lineage>
</organism>
<accession>C5D5L8</accession>
<name>LEUC_GEOSW</name>
<feature type="chain" id="PRO_1000213328" description="3-isopropylmalate dehydratase large subunit">
    <location>
        <begin position="1"/>
        <end position="471"/>
    </location>
</feature>
<feature type="binding site" evidence="1">
    <location>
        <position position="347"/>
    </location>
    <ligand>
        <name>[4Fe-4S] cluster</name>
        <dbReference type="ChEBI" id="CHEBI:49883"/>
    </ligand>
</feature>
<feature type="binding site" evidence="1">
    <location>
        <position position="407"/>
    </location>
    <ligand>
        <name>[4Fe-4S] cluster</name>
        <dbReference type="ChEBI" id="CHEBI:49883"/>
    </ligand>
</feature>
<feature type="binding site" evidence="1">
    <location>
        <position position="410"/>
    </location>
    <ligand>
        <name>[4Fe-4S] cluster</name>
        <dbReference type="ChEBI" id="CHEBI:49883"/>
    </ligand>
</feature>
<gene>
    <name evidence="1" type="primary">leuC</name>
    <name type="ordered locus">GWCH70_2591</name>
</gene>